<proteinExistence type="evidence at protein level"/>
<evidence type="ECO:0000305" key="1"/>
<evidence type="ECO:0007829" key="2">
    <source>
        <dbReference type="PDB" id="2KC5"/>
    </source>
</evidence>
<keyword id="KW-0002">3D-structure</keyword>
<keyword id="KW-1185">Reference proteome</keyword>
<feature type="chain" id="PRO_0000201426" description="Hydrogenase-2 operon protein HybE">
    <location>
        <begin position="1"/>
        <end position="162"/>
    </location>
</feature>
<feature type="sequence conflict" description="In Ref. 1; AAA21593." evidence="1" ref="1">
    <original>G</original>
    <variation>A</variation>
    <location>
        <position position="7"/>
    </location>
</feature>
<feature type="strand" evidence="2">
    <location>
        <begin position="4"/>
        <end position="6"/>
    </location>
</feature>
<feature type="helix" evidence="2">
    <location>
        <begin position="13"/>
        <end position="23"/>
    </location>
</feature>
<feature type="helix" evidence="2">
    <location>
        <begin position="29"/>
        <end position="31"/>
    </location>
</feature>
<feature type="strand" evidence="2">
    <location>
        <begin position="41"/>
        <end position="48"/>
    </location>
</feature>
<feature type="strand" evidence="2">
    <location>
        <begin position="51"/>
        <end position="57"/>
    </location>
</feature>
<feature type="strand" evidence="2">
    <location>
        <begin position="62"/>
        <end position="68"/>
    </location>
</feature>
<feature type="strand" evidence="2">
    <location>
        <begin position="73"/>
        <end position="75"/>
    </location>
</feature>
<feature type="strand" evidence="2">
    <location>
        <begin position="82"/>
        <end position="85"/>
    </location>
</feature>
<feature type="strand" evidence="2">
    <location>
        <begin position="92"/>
        <end position="99"/>
    </location>
</feature>
<feature type="turn" evidence="2">
    <location>
        <begin position="100"/>
        <end position="102"/>
    </location>
</feature>
<feature type="strand" evidence="2">
    <location>
        <begin position="103"/>
        <end position="111"/>
    </location>
</feature>
<feature type="helix" evidence="2">
    <location>
        <begin position="120"/>
        <end position="135"/>
    </location>
</feature>
<comment type="interaction">
    <interactant intactId="EBI-552588">
        <id>P0AAN1</id>
    </interactant>
    <interactant intactId="EBI-552619">
        <id>P69741</id>
        <label>hybO</label>
    </interactant>
    <organismsDiffer>false</organismsDiffer>
    <experiments>6</experiments>
</comment>
<comment type="similarity">
    <text evidence="1">Belongs to the HupJ family.</text>
</comment>
<reference key="1">
    <citation type="journal article" date="1994" name="J. Bacteriol.">
        <title>Cloning, sequencing, and mutational analysis of the hyb operon encoding Escherichia coli hydrogenase 2.</title>
        <authorList>
            <person name="Menon N.K."/>
            <person name="Chatelus C.Y."/>
            <person name="Dervartanian M."/>
            <person name="Wendt J.C."/>
            <person name="Shanmugam K.T."/>
            <person name="Peck H.D. Jr."/>
            <person name="Przybyla A.E."/>
        </authorList>
    </citation>
    <scope>NUCLEOTIDE SEQUENCE [GENOMIC DNA]</scope>
    <source>
        <strain>K12 / TG1</strain>
    </source>
</reference>
<reference key="2">
    <citation type="journal article" date="1997" name="Science">
        <title>The complete genome sequence of Escherichia coli K-12.</title>
        <authorList>
            <person name="Blattner F.R."/>
            <person name="Plunkett G. III"/>
            <person name="Bloch C.A."/>
            <person name="Perna N.T."/>
            <person name="Burland V."/>
            <person name="Riley M."/>
            <person name="Collado-Vides J."/>
            <person name="Glasner J.D."/>
            <person name="Rode C.K."/>
            <person name="Mayhew G.F."/>
            <person name="Gregor J."/>
            <person name="Davis N.W."/>
            <person name="Kirkpatrick H.A."/>
            <person name="Goeden M.A."/>
            <person name="Rose D.J."/>
            <person name="Mau B."/>
            <person name="Shao Y."/>
        </authorList>
    </citation>
    <scope>NUCLEOTIDE SEQUENCE [LARGE SCALE GENOMIC DNA]</scope>
    <source>
        <strain>K12 / MG1655 / ATCC 47076</strain>
    </source>
</reference>
<reference key="3">
    <citation type="journal article" date="2006" name="Mol. Syst. Biol.">
        <title>Highly accurate genome sequences of Escherichia coli K-12 strains MG1655 and W3110.</title>
        <authorList>
            <person name="Hayashi K."/>
            <person name="Morooka N."/>
            <person name="Yamamoto Y."/>
            <person name="Fujita K."/>
            <person name="Isono K."/>
            <person name="Choi S."/>
            <person name="Ohtsubo E."/>
            <person name="Baba T."/>
            <person name="Wanner B.L."/>
            <person name="Mori H."/>
            <person name="Horiuchi T."/>
        </authorList>
    </citation>
    <scope>NUCLEOTIDE SEQUENCE [LARGE SCALE GENOMIC DNA]</scope>
    <source>
        <strain>K12 / W3110 / ATCC 27325 / DSM 5911</strain>
    </source>
</reference>
<accession>P0AAN1</accession>
<accession>P37183</accession>
<accession>Q2M9K3</accession>
<organism>
    <name type="scientific">Escherichia coli (strain K12)</name>
    <dbReference type="NCBI Taxonomy" id="83333"/>
    <lineage>
        <taxon>Bacteria</taxon>
        <taxon>Pseudomonadati</taxon>
        <taxon>Pseudomonadota</taxon>
        <taxon>Gammaproteobacteria</taxon>
        <taxon>Enterobacterales</taxon>
        <taxon>Enterobacteriaceae</taxon>
        <taxon>Escherichia</taxon>
    </lineage>
</organism>
<protein>
    <recommendedName>
        <fullName>Hydrogenase-2 operon protein HybE</fullName>
    </recommendedName>
</protein>
<name>HYBE_ECOLI</name>
<dbReference type="EMBL" id="U09177">
    <property type="protein sequence ID" value="AAA21593.1"/>
    <property type="molecule type" value="Genomic_DNA"/>
</dbReference>
<dbReference type="EMBL" id="U28377">
    <property type="protein sequence ID" value="AAA69159.1"/>
    <property type="molecule type" value="Genomic_DNA"/>
</dbReference>
<dbReference type="EMBL" id="U00096">
    <property type="protein sequence ID" value="AAC76028.1"/>
    <property type="molecule type" value="Genomic_DNA"/>
</dbReference>
<dbReference type="EMBL" id="AP009048">
    <property type="protein sequence ID" value="BAE77053.1"/>
    <property type="molecule type" value="Genomic_DNA"/>
</dbReference>
<dbReference type="PIR" id="F65085">
    <property type="entry name" value="F65085"/>
</dbReference>
<dbReference type="RefSeq" id="NP_417466.1">
    <property type="nucleotide sequence ID" value="NC_000913.3"/>
</dbReference>
<dbReference type="RefSeq" id="WP_000134014.1">
    <property type="nucleotide sequence ID" value="NZ_STEB01000001.1"/>
</dbReference>
<dbReference type="PDB" id="2KC5">
    <property type="method" value="NMR"/>
    <property type="chains" value="A=1-162"/>
</dbReference>
<dbReference type="PDBsum" id="2KC5"/>
<dbReference type="BMRB" id="P0AAN1"/>
<dbReference type="SMR" id="P0AAN1"/>
<dbReference type="BioGRID" id="4262373">
    <property type="interactions" value="19"/>
</dbReference>
<dbReference type="DIP" id="DIP-35795N"/>
<dbReference type="FunCoup" id="P0AAN1">
    <property type="interactions" value="58"/>
</dbReference>
<dbReference type="IntAct" id="P0AAN1">
    <property type="interactions" value="7"/>
</dbReference>
<dbReference type="MINT" id="P0AAN1"/>
<dbReference type="STRING" id="511145.b2992"/>
<dbReference type="jPOST" id="P0AAN1"/>
<dbReference type="PaxDb" id="511145-b2992"/>
<dbReference type="EnsemblBacteria" id="AAC76028">
    <property type="protein sequence ID" value="AAC76028"/>
    <property type="gene ID" value="b2992"/>
</dbReference>
<dbReference type="GeneID" id="93778993"/>
<dbReference type="GeneID" id="947483"/>
<dbReference type="KEGG" id="ecj:JW2960"/>
<dbReference type="KEGG" id="eco:b2992"/>
<dbReference type="KEGG" id="ecoc:C3026_16365"/>
<dbReference type="PATRIC" id="fig|1411691.4.peg.3737"/>
<dbReference type="EchoBASE" id="EB1751"/>
<dbReference type="eggNOG" id="COG1773">
    <property type="taxonomic scope" value="Bacteria"/>
</dbReference>
<dbReference type="HOGENOM" id="CLU_091699_2_0_6"/>
<dbReference type="InParanoid" id="P0AAN1"/>
<dbReference type="OMA" id="LTPWMIS"/>
<dbReference type="OrthoDB" id="6485044at2"/>
<dbReference type="PhylomeDB" id="P0AAN1"/>
<dbReference type="BioCyc" id="EcoCyc:EG11803-MONOMER"/>
<dbReference type="EvolutionaryTrace" id="P0AAN1"/>
<dbReference type="PRO" id="PR:P0AAN1"/>
<dbReference type="Proteomes" id="UP000000625">
    <property type="component" value="Chromosome"/>
</dbReference>
<dbReference type="GO" id="GO:0070678">
    <property type="term" value="F:preprotein binding"/>
    <property type="evidence" value="ECO:0000353"/>
    <property type="project" value="EcoCyc"/>
</dbReference>
<dbReference type="GO" id="GO:0051604">
    <property type="term" value="P:protein maturation"/>
    <property type="evidence" value="ECO:0000315"/>
    <property type="project" value="EcoCyc"/>
</dbReference>
<dbReference type="FunFam" id="3.30.1460.40:FF:000001">
    <property type="entry name" value="Hydrogenase-2 operon protein hybE"/>
    <property type="match status" value="1"/>
</dbReference>
<dbReference type="Gene3D" id="3.30.1460.40">
    <property type="entry name" value="[NiFe]-hydrogenase assembly chaperone, HybE"/>
    <property type="match status" value="1"/>
</dbReference>
<dbReference type="InterPro" id="IPR023994">
    <property type="entry name" value="NiFe-hyd_HybE"/>
</dbReference>
<dbReference type="InterPro" id="IPR038530">
    <property type="entry name" value="NiFe-hyd_HybE_sf"/>
</dbReference>
<dbReference type="NCBIfam" id="TIGR03993">
    <property type="entry name" value="hydrog_HybE"/>
    <property type="match status" value="1"/>
</dbReference>
<dbReference type="NCBIfam" id="NF007776">
    <property type="entry name" value="PRK10465.1"/>
    <property type="match status" value="1"/>
</dbReference>
<dbReference type="Pfam" id="PF11939">
    <property type="entry name" value="NiFe-hyd_HybE"/>
    <property type="match status" value="1"/>
</dbReference>
<gene>
    <name type="primary">hybE</name>
    <name type="ordered locus">b2992</name>
    <name type="ordered locus">JW2960</name>
</gene>
<sequence length="162" mass="17964">MTEEIAGFQTSPKAQVQAAFEEIARRSMHDLSFLHPSMPVYVSDFTLFEGQWTGCVITPWMLSAVIFPGPDQLWPLRKVSEKIGLQLPYGTMTFTVGELDGVSQYLSCSLMSPLSHSMSIEEGQRLTDDCARMILSLPVTNPDVPHAGRRALLFGRRSGENA</sequence>